<accession>Q5R414</accession>
<accession>Q5R6T9</accession>
<name>CYFP2_PONAB</name>
<dbReference type="EMBL" id="CR860395">
    <property type="protein sequence ID" value="CAH92521.1"/>
    <property type="molecule type" value="mRNA"/>
</dbReference>
<dbReference type="EMBL" id="CR861446">
    <property type="protein sequence ID" value="CAH93502.1"/>
    <property type="molecule type" value="mRNA"/>
</dbReference>
<dbReference type="RefSeq" id="NP_001126478.1">
    <property type="nucleotide sequence ID" value="NM_001133006.1"/>
</dbReference>
<dbReference type="SMR" id="Q5R414"/>
<dbReference type="FunCoup" id="Q5R414">
    <property type="interactions" value="1291"/>
</dbReference>
<dbReference type="STRING" id="9601.ENSPPYP00000017891"/>
<dbReference type="GeneID" id="100173465"/>
<dbReference type="KEGG" id="pon:100173465"/>
<dbReference type="CTD" id="26999"/>
<dbReference type="eggNOG" id="KOG3534">
    <property type="taxonomic scope" value="Eukaryota"/>
</dbReference>
<dbReference type="InParanoid" id="Q5R414"/>
<dbReference type="OrthoDB" id="10265867at2759"/>
<dbReference type="Proteomes" id="UP000001595">
    <property type="component" value="Unplaced"/>
</dbReference>
<dbReference type="GO" id="GO:0005737">
    <property type="term" value="C:cytoplasm"/>
    <property type="evidence" value="ECO:0000250"/>
    <property type="project" value="UniProtKB"/>
</dbReference>
<dbReference type="GO" id="GO:0043005">
    <property type="term" value="C:neuron projection"/>
    <property type="evidence" value="ECO:0007669"/>
    <property type="project" value="UniProtKB-KW"/>
</dbReference>
<dbReference type="GO" id="GO:0005634">
    <property type="term" value="C:nucleus"/>
    <property type="evidence" value="ECO:0007669"/>
    <property type="project" value="UniProtKB-SubCell"/>
</dbReference>
<dbReference type="GO" id="GO:0048471">
    <property type="term" value="C:perinuclear region of cytoplasm"/>
    <property type="evidence" value="ECO:0000250"/>
    <property type="project" value="UniProtKB"/>
</dbReference>
<dbReference type="GO" id="GO:0045202">
    <property type="term" value="C:synapse"/>
    <property type="evidence" value="ECO:0007669"/>
    <property type="project" value="UniProtKB-SubCell"/>
</dbReference>
<dbReference type="GO" id="GO:0031267">
    <property type="term" value="F:small GTPase binding"/>
    <property type="evidence" value="ECO:0007669"/>
    <property type="project" value="InterPro"/>
</dbReference>
<dbReference type="GO" id="GO:0006915">
    <property type="term" value="P:apoptotic process"/>
    <property type="evidence" value="ECO:0000250"/>
    <property type="project" value="UniProtKB"/>
</dbReference>
<dbReference type="GO" id="GO:0098609">
    <property type="term" value="P:cell-cell adhesion"/>
    <property type="evidence" value="ECO:0000250"/>
    <property type="project" value="UniProtKB"/>
</dbReference>
<dbReference type="GO" id="GO:0030833">
    <property type="term" value="P:regulation of actin filament polymerization"/>
    <property type="evidence" value="ECO:0007669"/>
    <property type="project" value="InterPro"/>
</dbReference>
<dbReference type="InterPro" id="IPR009828">
    <property type="entry name" value="CYRIA/CYRIB_Rac1-bd"/>
</dbReference>
<dbReference type="InterPro" id="IPR008081">
    <property type="entry name" value="Cytoplasmic_FMR1-int"/>
</dbReference>
<dbReference type="PANTHER" id="PTHR12195">
    <property type="entry name" value="CYTOPLASMIC FMR1-INTERACTING PROTEIN-RELATED"/>
    <property type="match status" value="1"/>
</dbReference>
<dbReference type="Pfam" id="PF07159">
    <property type="entry name" value="CYRIA-B_Rac1-bd"/>
    <property type="match status" value="1"/>
</dbReference>
<dbReference type="Pfam" id="PF05994">
    <property type="entry name" value="FragX_IP"/>
    <property type="match status" value="1"/>
</dbReference>
<dbReference type="PIRSF" id="PIRSF008153">
    <property type="entry name" value="FMR1_interacting"/>
    <property type="match status" value="1"/>
</dbReference>
<dbReference type="PRINTS" id="PR01698">
    <property type="entry name" value="CYTOFMRPINTP"/>
</dbReference>
<evidence type="ECO:0000250" key="1">
    <source>
        <dbReference type="UniProtKB" id="Q5SQX6"/>
    </source>
</evidence>
<evidence type="ECO:0000250" key="2">
    <source>
        <dbReference type="UniProtKB" id="Q96F07"/>
    </source>
</evidence>
<evidence type="ECO:0000255" key="3"/>
<evidence type="ECO:0000305" key="4"/>
<evidence type="ECO:0000312" key="5">
    <source>
        <dbReference type="EMBL" id="CAH93502.1"/>
    </source>
</evidence>
<comment type="function">
    <text evidence="1 2">Involved in T-cell adhesion and p53-dependent induction of apoptosis. Does not bind RNA (By similarity). As component of the WAVE1 complex, required for BDNF-NTRK2 endocytic trafficking and signaling from early endosomes (By similarity).</text>
</comment>
<comment type="subunit">
    <text evidence="1 2">Component of the WAVE1 complex composed of ABI2, CYFIP2, BRK1, NCKAP1 and WASF1/WAVE1. Interacts with RAC1 (activated form) which causes the complex to dissociate, releasing activated WASF1. The complex can also be activated by NCK1. Interacts with SHANK3; the interaction mediates the association of SHANK3 with the WAVE1 complex. Interacts with FMR1; the interaction occurs in a RNA-dependent manner. Interacts with FXR1 and FXR2. Interacts with TMEM108 (via N-terminus); the interaction associates TMEM108 with the WAVE1 complex (By similarity).</text>
</comment>
<comment type="subcellular location">
    <subcellularLocation>
        <location evidence="2">Cytoplasm</location>
    </subcellularLocation>
    <subcellularLocation>
        <location evidence="2">Nucleus</location>
    </subcellularLocation>
    <subcellularLocation>
        <location evidence="1">Cytoplasm</location>
        <location evidence="1">Perinuclear region</location>
    </subcellularLocation>
    <subcellularLocation>
        <location evidence="1">Synapse</location>
        <location evidence="1">Synaptosome</location>
    </subcellularLocation>
    <text evidence="1">Highly expressed in the perinuclear regionand enriched in synaptosomes (By similarity).</text>
</comment>
<comment type="similarity">
    <text evidence="3">Belongs to the CYFIP family.</text>
</comment>
<gene>
    <name evidence="2" type="primary">CYFIP2</name>
</gene>
<keyword id="KW-0007">Acetylation</keyword>
<keyword id="KW-0053">Apoptosis</keyword>
<keyword id="KW-0130">Cell adhesion</keyword>
<keyword id="KW-0963">Cytoplasm</keyword>
<keyword id="KW-0539">Nucleus</keyword>
<keyword id="KW-1185">Reference proteome</keyword>
<keyword id="KW-0691">RNA editing</keyword>
<keyword id="KW-0770">Synapse</keyword>
<keyword id="KW-0771">Synaptosome</keyword>
<sequence>MTTHVTLEDALSNVDLLEELPLPDQQPCIEPPPSSIMYQANFDTNFEDRNAFVTGIARYIEQATVHSSMNEMLEEGHEYAVMLYTWRSCSRAIPQVKCNEQPNRVEIYEKTVEVLEPEVTKLMKFMYFQRKAIERFCSEVKRLCHAERRKDFVSEAYLLTLGKFINMFAVLDELKNMKCSVKNDHSAYKRAAQFLRKMADPQSIQESQNLSMFLANHNRITQCLHQQLEVIPGYEELLADIVNICVDYYENKMYLTPSEKHMLLKVMGFGLYLMDGNVSNIYKLDAKKRINLSKIDKFFKQLQVVPLFGDMQIELARYIETSAHYEENKSKWTCTQSSISPQYNICEQMVQIRDDHIRFISELARYSNSEVVTGSGLDSQKSDEEYRELFDLALRGLQLLSKWSAHVMEVYSWKLVHPTDKFCNKDCPGTAEEYERATRYNYTSEEKFAFVEVIAMIKGLQVLMGRMESVFNQAIRNTIYAALQDFAQVTLREPLRQAVRKKKNVLISVLQAIRKTICDWEGGREPPNDPCLRGEKDPKGGFDIKVPRRAVGPSSTQLYMVRTMLESLIADKSGSKKTLRSSLDGPIVLAIEDFHKQSFFFTHLLNISEALQQCCDLSQLWFREFFLELTMGRRIQFPIEMSMPWILTDHILETKEPSMMEYVLYPLDLYNDSAYYALTKFKKQFLYDEIEAEVNLCFDQFVYKLADQIFAYYKAMAGSVLLDKRFRAECKNYGVIIPYPPSNRYETLLKQRHVQLLGRSIDLNRLITQRISAAMYKSLDQAISRFESEDLTSIVELEWLLEINRLTHRLLCKHMTLDSFDAMFREANHNVSAPYGRITLHVFWELNFDFLPNYCYNGSTNRFVRTAIPFTQEPQRDKPANIQPYYLYGSKPLNIAYSHIYSSYRNFVGPPHFKTICRLLGYQGIAVVMEELLKIVESLLQGTILQYVKTLIEVMPKICRLPRHEYGSPGILEFFHHQLKDIIEYAELKTDVFQSLREVGNAILFCLLIEQALSQEEVCDLLHAAPFQNILPRVYIKEGERLEVRMKRLEAKYAPLHLVPLIERLGTPQQIAIAREGDLLTKERLCCGLSMFEVILTRIRSYLQDPIWRGPPPTNGVMHVDECVEFHRLWSAMQFVYCIPVGTNEFTAEQCFGDGLNWAGCSIIVLLGQQRRFDLFDFCYHLLKVQRQDGKDEIIKNVPLKKMADRIRKYQILNNEVFAILNKYMKSVETDSSTVEHVRCFQPPIHQSLATTC</sequence>
<reference evidence="5" key="1">
    <citation type="submission" date="2004-11" db="EMBL/GenBank/DDBJ databases">
        <authorList>
            <consortium name="The German cDNA consortium"/>
        </authorList>
    </citation>
    <scope>NUCLEOTIDE SEQUENCE [LARGE SCALE MRNA]</scope>
    <source>
        <tissue evidence="5">Brain cortex</tissue>
    </source>
</reference>
<proteinExistence type="evidence at transcript level"/>
<organism>
    <name type="scientific">Pongo abelii</name>
    <name type="common">Sumatran orangutan</name>
    <name type="synonym">Pongo pygmaeus abelii</name>
    <dbReference type="NCBI Taxonomy" id="9601"/>
    <lineage>
        <taxon>Eukaryota</taxon>
        <taxon>Metazoa</taxon>
        <taxon>Chordata</taxon>
        <taxon>Craniata</taxon>
        <taxon>Vertebrata</taxon>
        <taxon>Euteleostomi</taxon>
        <taxon>Mammalia</taxon>
        <taxon>Eutheria</taxon>
        <taxon>Euarchontoglires</taxon>
        <taxon>Primates</taxon>
        <taxon>Haplorrhini</taxon>
        <taxon>Catarrhini</taxon>
        <taxon>Hominidae</taxon>
        <taxon>Pongo</taxon>
    </lineage>
</organism>
<feature type="chain" id="PRO_0000279711" description="Cytoplasmic FMR1-interacting protein 2">
    <location>
        <begin position="1"/>
        <end position="1253"/>
    </location>
</feature>
<feature type="modified residue" description="N6-acetyllysine" evidence="2">
    <location>
        <position position="1037"/>
    </location>
</feature>
<feature type="sequence conflict" description="In Ref. 1; CAH92521." evidence="4" ref="1">
    <original>M</original>
    <variation>T</variation>
    <location>
        <position position="467"/>
    </location>
</feature>
<feature type="sequence conflict" description="In Ref. 1; CAH92521." evidence="4" ref="1">
    <original>C</original>
    <variation>F</variation>
    <location>
        <position position="531"/>
    </location>
</feature>
<feature type="sequence conflict" description="In Ref. 1; CAH92521." evidence="4" ref="1">
    <original>R</original>
    <variation>C</variation>
    <location>
        <position position="549"/>
    </location>
</feature>
<feature type="sequence conflict" description="In Ref. 1; CAH92521." evidence="4" ref="1">
    <original>E</original>
    <variation>K</variation>
    <location>
        <position position="937"/>
    </location>
</feature>
<protein>
    <recommendedName>
        <fullName>Cytoplasmic FMR1-interacting protein 2</fullName>
    </recommendedName>
</protein>